<sequence>MEYYNVGKIVNTHGVRGEVRVLATTDFIDERFAKGNTLYLQQSGEPLPLTIESTRQHKGFVLVKFVGYDNINDVEQFRDHELMVSADDQQPLDDGQYYYHQIIGLDVETTDGRHLGKIKEILSPGANDVWVVERPEKRDLLLPVIDEVVKNVDLDKNFVTVELMEGLE</sequence>
<protein>
    <recommendedName>
        <fullName evidence="1">Ribosome maturation factor RimM</fullName>
    </recommendedName>
</protein>
<evidence type="ECO:0000255" key="1">
    <source>
        <dbReference type="HAMAP-Rule" id="MF_00014"/>
    </source>
</evidence>
<accession>B2G819</accession>
<comment type="function">
    <text evidence="1">An accessory protein needed during the final step in the assembly of 30S ribosomal subunit, possibly for assembly of the head region. Essential for efficient processing of 16S rRNA. May be needed both before and after RbfA during the maturation of 16S rRNA. It has affinity for free ribosomal 30S subunits but not for 70S ribosomes.</text>
</comment>
<comment type="subunit">
    <text evidence="1">Binds ribosomal protein uS19.</text>
</comment>
<comment type="subcellular location">
    <subcellularLocation>
        <location evidence="1">Cytoplasm</location>
    </subcellularLocation>
</comment>
<comment type="domain">
    <text evidence="1">The PRC barrel domain binds ribosomal protein uS19.</text>
</comment>
<comment type="similarity">
    <text evidence="1">Belongs to the RimM family.</text>
</comment>
<dbReference type="EMBL" id="AP007281">
    <property type="protein sequence ID" value="BAG25601.1"/>
    <property type="molecule type" value="Genomic_DNA"/>
</dbReference>
<dbReference type="RefSeq" id="WP_003668365.1">
    <property type="nucleotide sequence ID" value="NC_010609.1"/>
</dbReference>
<dbReference type="SMR" id="B2G819"/>
<dbReference type="KEGG" id="lrf:LAR_1085"/>
<dbReference type="HOGENOM" id="CLU_077636_3_1_9"/>
<dbReference type="GO" id="GO:0005737">
    <property type="term" value="C:cytoplasm"/>
    <property type="evidence" value="ECO:0007669"/>
    <property type="project" value="UniProtKB-SubCell"/>
</dbReference>
<dbReference type="GO" id="GO:0005840">
    <property type="term" value="C:ribosome"/>
    <property type="evidence" value="ECO:0007669"/>
    <property type="project" value="InterPro"/>
</dbReference>
<dbReference type="GO" id="GO:0043022">
    <property type="term" value="F:ribosome binding"/>
    <property type="evidence" value="ECO:0007669"/>
    <property type="project" value="InterPro"/>
</dbReference>
<dbReference type="GO" id="GO:0042274">
    <property type="term" value="P:ribosomal small subunit biogenesis"/>
    <property type="evidence" value="ECO:0007669"/>
    <property type="project" value="UniProtKB-UniRule"/>
</dbReference>
<dbReference type="GO" id="GO:0006364">
    <property type="term" value="P:rRNA processing"/>
    <property type="evidence" value="ECO:0007669"/>
    <property type="project" value="UniProtKB-UniRule"/>
</dbReference>
<dbReference type="Gene3D" id="2.30.30.240">
    <property type="entry name" value="PRC-barrel domain"/>
    <property type="match status" value="1"/>
</dbReference>
<dbReference type="Gene3D" id="2.40.30.60">
    <property type="entry name" value="RimM"/>
    <property type="match status" value="1"/>
</dbReference>
<dbReference type="HAMAP" id="MF_00014">
    <property type="entry name" value="Ribosome_mat_RimM"/>
    <property type="match status" value="1"/>
</dbReference>
<dbReference type="InterPro" id="IPR027275">
    <property type="entry name" value="PRC-brl_dom"/>
</dbReference>
<dbReference type="InterPro" id="IPR011033">
    <property type="entry name" value="PRC_barrel-like_sf"/>
</dbReference>
<dbReference type="InterPro" id="IPR011961">
    <property type="entry name" value="RimM"/>
</dbReference>
<dbReference type="InterPro" id="IPR002676">
    <property type="entry name" value="RimM_N"/>
</dbReference>
<dbReference type="InterPro" id="IPR036976">
    <property type="entry name" value="RimM_N_sf"/>
</dbReference>
<dbReference type="InterPro" id="IPR009000">
    <property type="entry name" value="Transl_B-barrel_sf"/>
</dbReference>
<dbReference type="NCBIfam" id="TIGR02273">
    <property type="entry name" value="16S_RimM"/>
    <property type="match status" value="1"/>
</dbReference>
<dbReference type="PANTHER" id="PTHR33692">
    <property type="entry name" value="RIBOSOME MATURATION FACTOR RIMM"/>
    <property type="match status" value="1"/>
</dbReference>
<dbReference type="PANTHER" id="PTHR33692:SF1">
    <property type="entry name" value="RIBOSOME MATURATION FACTOR RIMM"/>
    <property type="match status" value="1"/>
</dbReference>
<dbReference type="Pfam" id="PF05239">
    <property type="entry name" value="PRC"/>
    <property type="match status" value="1"/>
</dbReference>
<dbReference type="Pfam" id="PF01782">
    <property type="entry name" value="RimM"/>
    <property type="match status" value="1"/>
</dbReference>
<dbReference type="SUPFAM" id="SSF50346">
    <property type="entry name" value="PRC-barrel domain"/>
    <property type="match status" value="1"/>
</dbReference>
<dbReference type="SUPFAM" id="SSF50447">
    <property type="entry name" value="Translation proteins"/>
    <property type="match status" value="1"/>
</dbReference>
<organism>
    <name type="scientific">Limosilactobacillus reuteri subsp. reuteri (strain JCM 1112)</name>
    <name type="common">Lactobacillus reuteri</name>
    <dbReference type="NCBI Taxonomy" id="557433"/>
    <lineage>
        <taxon>Bacteria</taxon>
        <taxon>Bacillati</taxon>
        <taxon>Bacillota</taxon>
        <taxon>Bacilli</taxon>
        <taxon>Lactobacillales</taxon>
        <taxon>Lactobacillaceae</taxon>
        <taxon>Limosilactobacillus</taxon>
    </lineage>
</organism>
<proteinExistence type="inferred from homology"/>
<name>RIMM_LIMRJ</name>
<gene>
    <name evidence="1" type="primary">rimM</name>
    <name type="ordered locus">LAR_1085</name>
</gene>
<keyword id="KW-0143">Chaperone</keyword>
<keyword id="KW-0963">Cytoplasm</keyword>
<keyword id="KW-0690">Ribosome biogenesis</keyword>
<keyword id="KW-0698">rRNA processing</keyword>
<feature type="chain" id="PRO_1000089507" description="Ribosome maturation factor RimM">
    <location>
        <begin position="1"/>
        <end position="168"/>
    </location>
</feature>
<feature type="domain" description="PRC barrel" evidence="1">
    <location>
        <begin position="93"/>
        <end position="167"/>
    </location>
</feature>
<reference key="1">
    <citation type="journal article" date="2008" name="DNA Res.">
        <title>Comparative genome analysis of Lactobacillus reuteri and Lactobacillus fermentum reveal a genomic island for reuterin and cobalamin production.</title>
        <authorList>
            <person name="Morita H."/>
            <person name="Toh H."/>
            <person name="Fukuda S."/>
            <person name="Horikawa H."/>
            <person name="Oshima K."/>
            <person name="Suzuki T."/>
            <person name="Murakami M."/>
            <person name="Hisamatsu S."/>
            <person name="Kato Y."/>
            <person name="Takizawa T."/>
            <person name="Fukuoka H."/>
            <person name="Yoshimura T."/>
            <person name="Itoh K."/>
            <person name="O'Sullivan D.J."/>
            <person name="McKay L.L."/>
            <person name="Ohno H."/>
            <person name="Kikuchi J."/>
            <person name="Masaoka T."/>
            <person name="Hattori M."/>
        </authorList>
    </citation>
    <scope>NUCLEOTIDE SEQUENCE [LARGE SCALE GENOMIC DNA]</scope>
    <source>
        <strain>JCM 1112</strain>
    </source>
</reference>